<protein>
    <recommendedName>
        <fullName>Ribosomal RNA-processing protein 8</fullName>
        <ecNumber>2.1.1.-</ecNumber>
    </recommendedName>
</protein>
<accession>Q84JC0</accession>
<accession>Q9FM44</accession>
<organism>
    <name type="scientific">Arabidopsis thaliana</name>
    <name type="common">Mouse-ear cress</name>
    <dbReference type="NCBI Taxonomy" id="3702"/>
    <lineage>
        <taxon>Eukaryota</taxon>
        <taxon>Viridiplantae</taxon>
        <taxon>Streptophyta</taxon>
        <taxon>Embryophyta</taxon>
        <taxon>Tracheophyta</taxon>
        <taxon>Spermatophyta</taxon>
        <taxon>Magnoliopsida</taxon>
        <taxon>eudicotyledons</taxon>
        <taxon>Gunneridae</taxon>
        <taxon>Pentapetalae</taxon>
        <taxon>rosids</taxon>
        <taxon>malvids</taxon>
        <taxon>Brassicales</taxon>
        <taxon>Brassicaceae</taxon>
        <taxon>Camelineae</taxon>
        <taxon>Arabidopsis</taxon>
    </lineage>
</organism>
<keyword id="KW-0025">Alternative splicing</keyword>
<keyword id="KW-0156">Chromatin regulator</keyword>
<keyword id="KW-0489">Methyltransferase</keyword>
<keyword id="KW-0539">Nucleus</keyword>
<keyword id="KW-1185">Reference proteome</keyword>
<keyword id="KW-0678">Repressor</keyword>
<keyword id="KW-0698">rRNA processing</keyword>
<keyword id="KW-0949">S-adenosyl-L-methionine</keyword>
<keyword id="KW-0804">Transcription</keyword>
<keyword id="KW-0805">Transcription regulation</keyword>
<keyword id="KW-0808">Transferase</keyword>
<dbReference type="EC" id="2.1.1.-"/>
<dbReference type="EMBL" id="AB009052">
    <property type="protein sequence ID" value="BAB08523.1"/>
    <property type="status" value="ALT_SEQ"/>
    <property type="molecule type" value="Genomic_DNA"/>
</dbReference>
<dbReference type="EMBL" id="CP002688">
    <property type="protein sequence ID" value="AED94560.1"/>
    <property type="molecule type" value="Genomic_DNA"/>
</dbReference>
<dbReference type="EMBL" id="BT002940">
    <property type="protein sequence ID" value="AAO22753.1"/>
    <property type="molecule type" value="mRNA"/>
</dbReference>
<dbReference type="EMBL" id="BT004445">
    <property type="protein sequence ID" value="AAO42439.1"/>
    <property type="molecule type" value="mRNA"/>
</dbReference>
<dbReference type="RefSeq" id="NP_001330531.1">
    <property type="nucleotide sequence ID" value="NM_001344336.1"/>
</dbReference>
<dbReference type="RefSeq" id="NP_198869.2">
    <molecule id="Q84JC0-1"/>
    <property type="nucleotide sequence ID" value="NM_123417.4"/>
</dbReference>
<dbReference type="SMR" id="Q84JC0"/>
<dbReference type="FunCoup" id="Q84JC0">
    <property type="interactions" value="1401"/>
</dbReference>
<dbReference type="STRING" id="3702.Q84JC0"/>
<dbReference type="iPTMnet" id="Q84JC0"/>
<dbReference type="PaxDb" id="3702-AT5G40530.2"/>
<dbReference type="EnsemblPlants" id="AT5G40530.1">
    <molecule id="Q84JC0-1"/>
    <property type="protein sequence ID" value="AT5G40530.1"/>
    <property type="gene ID" value="AT5G40530"/>
</dbReference>
<dbReference type="GeneID" id="834051"/>
<dbReference type="Gramene" id="AT5G40530.1">
    <molecule id="Q84JC0-1"/>
    <property type="protein sequence ID" value="AT5G40530.1"/>
    <property type="gene ID" value="AT5G40530"/>
</dbReference>
<dbReference type="KEGG" id="ath:AT5G40530"/>
<dbReference type="Araport" id="AT5G40530"/>
<dbReference type="TAIR" id="AT5G40530"/>
<dbReference type="eggNOG" id="KOG3045">
    <property type="taxonomic scope" value="Eukaryota"/>
</dbReference>
<dbReference type="HOGENOM" id="CLU_027694_1_2_1"/>
<dbReference type="InParanoid" id="Q84JC0"/>
<dbReference type="OMA" id="KWPTNPL"/>
<dbReference type="OrthoDB" id="10258825at2759"/>
<dbReference type="PhylomeDB" id="Q84JC0"/>
<dbReference type="PRO" id="PR:Q84JC0"/>
<dbReference type="Proteomes" id="UP000006548">
    <property type="component" value="Chromosome 5"/>
</dbReference>
<dbReference type="ExpressionAtlas" id="Q84JC0">
    <property type="expression patterns" value="baseline and differential"/>
</dbReference>
<dbReference type="GO" id="GO:0005677">
    <property type="term" value="C:chromatin silencing complex"/>
    <property type="evidence" value="ECO:0000250"/>
    <property type="project" value="UniProtKB"/>
</dbReference>
<dbReference type="GO" id="GO:0005730">
    <property type="term" value="C:nucleolus"/>
    <property type="evidence" value="ECO:0000250"/>
    <property type="project" value="UniProtKB"/>
</dbReference>
<dbReference type="GO" id="GO:0033553">
    <property type="term" value="C:rDNA heterochromatin"/>
    <property type="evidence" value="ECO:0000250"/>
    <property type="project" value="UniProtKB"/>
</dbReference>
<dbReference type="GO" id="GO:0035064">
    <property type="term" value="F:methylated histone binding"/>
    <property type="evidence" value="ECO:0000250"/>
    <property type="project" value="UniProtKB"/>
</dbReference>
<dbReference type="GO" id="GO:0008168">
    <property type="term" value="F:methyltransferase activity"/>
    <property type="evidence" value="ECO:0007669"/>
    <property type="project" value="UniProtKB-KW"/>
</dbReference>
<dbReference type="GO" id="GO:0032259">
    <property type="term" value="P:methylation"/>
    <property type="evidence" value="ECO:0007669"/>
    <property type="project" value="UniProtKB-KW"/>
</dbReference>
<dbReference type="GO" id="GO:0000183">
    <property type="term" value="P:rDNA heterochromatin formation"/>
    <property type="evidence" value="ECO:0000250"/>
    <property type="project" value="UniProtKB"/>
</dbReference>
<dbReference type="GO" id="GO:0006364">
    <property type="term" value="P:rRNA processing"/>
    <property type="evidence" value="ECO:0007669"/>
    <property type="project" value="UniProtKB-KW"/>
</dbReference>
<dbReference type="FunFam" id="1.10.10.2150:FF:000001">
    <property type="entry name" value="Ribosomal RNA-processing protein 8"/>
    <property type="match status" value="1"/>
</dbReference>
<dbReference type="FunFam" id="3.40.50.150:FF:000068">
    <property type="entry name" value="Ribosomal RNA-processing protein 8"/>
    <property type="match status" value="1"/>
</dbReference>
<dbReference type="Gene3D" id="1.10.10.2150">
    <property type="entry name" value="Ribosomal RNA-processing protein 8, N-terminal domain"/>
    <property type="match status" value="1"/>
</dbReference>
<dbReference type="Gene3D" id="3.40.50.150">
    <property type="entry name" value="Vaccinia Virus protein VP39"/>
    <property type="match status" value="1"/>
</dbReference>
<dbReference type="InterPro" id="IPR007823">
    <property type="entry name" value="RRP8"/>
</dbReference>
<dbReference type="InterPro" id="IPR042036">
    <property type="entry name" value="RRP8_N"/>
</dbReference>
<dbReference type="InterPro" id="IPR029063">
    <property type="entry name" value="SAM-dependent_MTases_sf"/>
</dbReference>
<dbReference type="PANTHER" id="PTHR12787">
    <property type="entry name" value="RIBOSOMAL RNA-PROCESSING PROTEIN 8"/>
    <property type="match status" value="1"/>
</dbReference>
<dbReference type="PANTHER" id="PTHR12787:SF0">
    <property type="entry name" value="RIBOSOMAL RNA-PROCESSING PROTEIN 8"/>
    <property type="match status" value="1"/>
</dbReference>
<dbReference type="Pfam" id="PF05148">
    <property type="entry name" value="Methyltransf_8"/>
    <property type="match status" value="1"/>
</dbReference>
<dbReference type="SUPFAM" id="SSF53335">
    <property type="entry name" value="S-adenosyl-L-methionine-dependent methyltransferases"/>
    <property type="match status" value="1"/>
</dbReference>
<proteinExistence type="evidence at transcript level"/>
<comment type="function">
    <text evidence="1">Probable methyltransferase required to silence rDNA.</text>
</comment>
<comment type="subcellular location">
    <subcellularLocation>
        <location evidence="1">Nucleus</location>
        <location evidence="1">Nucleolus</location>
    </subcellularLocation>
</comment>
<comment type="alternative products">
    <event type="alternative splicing"/>
    <isoform>
        <id>Q84JC0-1</id>
        <name>1</name>
        <sequence type="displayed"/>
    </isoform>
    <text>A number of isoforms are produced. According to EST sequences.</text>
</comment>
<comment type="similarity">
    <text evidence="4">Belongs to the methyltransferase superfamily. RRP8 family.</text>
</comment>
<comment type="sequence caution" evidence="4">
    <conflict type="erroneous gene model prediction">
        <sequence resource="EMBL-CDS" id="BAB08523"/>
    </conflict>
</comment>
<sequence length="287" mass="32760">MTTEENKTSRNRKRKRQRNPKPSKEEPIETTPKNQNEKKNQRDTKNQQHGGSSAPSKRPKPSNFLDALRERLSGGQFRMLNEKLYTCSGKEALDYFKEDPQMFDMYHTGYQQQMSNWPELPVNSIINWLLSNSSSLVVADFGCGDARIAKSVKNKVFSFDLVSKNPSVIACDMSNTSLESSSVDVAVFCLSLMGTNYSSYIKEAHRVLRPSGMLLIAEVKSRFDPNNGGADPKDFVKAVCDLGFTSVLKDFSNKMFILFHFKKKEQMNSNQKIIKWPELKACLYKRR</sequence>
<feature type="chain" id="PRO_0000390459" description="Ribosomal RNA-processing protein 8">
    <location>
        <begin position="1"/>
        <end position="287"/>
    </location>
</feature>
<feature type="region of interest" description="Disordered" evidence="3">
    <location>
        <begin position="1"/>
        <end position="62"/>
    </location>
</feature>
<feature type="compositionally biased region" description="Basic residues" evidence="3">
    <location>
        <begin position="9"/>
        <end position="21"/>
    </location>
</feature>
<feature type="compositionally biased region" description="Basic and acidic residues" evidence="3">
    <location>
        <begin position="35"/>
        <end position="46"/>
    </location>
</feature>
<feature type="binding site" evidence="2">
    <location>
        <position position="107"/>
    </location>
    <ligand>
        <name>S-adenosyl-L-methionine</name>
        <dbReference type="ChEBI" id="CHEBI:59789"/>
    </ligand>
</feature>
<feature type="binding site" evidence="2">
    <location>
        <position position="142"/>
    </location>
    <ligand>
        <name>S-adenosyl-L-methionine</name>
        <dbReference type="ChEBI" id="CHEBI:59789"/>
    </ligand>
</feature>
<feature type="binding site" evidence="2">
    <location>
        <position position="160"/>
    </location>
    <ligand>
        <name>S-adenosyl-L-methionine</name>
        <dbReference type="ChEBI" id="CHEBI:59789"/>
    </ligand>
</feature>
<feature type="binding site" evidence="2">
    <location>
        <position position="172"/>
    </location>
    <ligand>
        <name>S-adenosyl-L-methionine</name>
        <dbReference type="ChEBI" id="CHEBI:59789"/>
    </ligand>
</feature>
<feature type="binding site" evidence="2">
    <location>
        <position position="173"/>
    </location>
    <ligand>
        <name>S-adenosyl-L-methionine</name>
        <dbReference type="ChEBI" id="CHEBI:59789"/>
    </ligand>
</feature>
<feature type="binding site" evidence="2">
    <location>
        <position position="189"/>
    </location>
    <ligand>
        <name>S-adenosyl-L-methionine</name>
        <dbReference type="ChEBI" id="CHEBI:59789"/>
    </ligand>
</feature>
<evidence type="ECO:0000250" key="1"/>
<evidence type="ECO:0000250" key="2">
    <source>
        <dbReference type="UniProtKB" id="O43159"/>
    </source>
</evidence>
<evidence type="ECO:0000256" key="3">
    <source>
        <dbReference type="SAM" id="MobiDB-lite"/>
    </source>
</evidence>
<evidence type="ECO:0000305" key="4"/>
<reference key="1">
    <citation type="journal article" date="1998" name="DNA Res.">
        <title>Structural analysis of Arabidopsis thaliana chromosome 5. IV. Sequence features of the regions of 1,456,315 bp covered by nineteen physically assigned P1 and TAC clones.</title>
        <authorList>
            <person name="Sato S."/>
            <person name="Kaneko T."/>
            <person name="Kotani H."/>
            <person name="Nakamura Y."/>
            <person name="Asamizu E."/>
            <person name="Miyajima N."/>
            <person name="Tabata S."/>
        </authorList>
    </citation>
    <scope>NUCLEOTIDE SEQUENCE [LARGE SCALE GENOMIC DNA]</scope>
    <source>
        <strain>cv. Columbia</strain>
    </source>
</reference>
<reference key="2">
    <citation type="journal article" date="2017" name="Plant J.">
        <title>Araport11: a complete reannotation of the Arabidopsis thaliana reference genome.</title>
        <authorList>
            <person name="Cheng C.Y."/>
            <person name="Krishnakumar V."/>
            <person name="Chan A.P."/>
            <person name="Thibaud-Nissen F."/>
            <person name="Schobel S."/>
            <person name="Town C.D."/>
        </authorList>
    </citation>
    <scope>GENOME REANNOTATION</scope>
    <source>
        <strain>cv. Columbia</strain>
    </source>
</reference>
<reference key="3">
    <citation type="journal article" date="2003" name="Science">
        <title>Empirical analysis of transcriptional activity in the Arabidopsis genome.</title>
        <authorList>
            <person name="Yamada K."/>
            <person name="Lim J."/>
            <person name="Dale J.M."/>
            <person name="Chen H."/>
            <person name="Shinn P."/>
            <person name="Palm C.J."/>
            <person name="Southwick A.M."/>
            <person name="Wu H.C."/>
            <person name="Kim C.J."/>
            <person name="Nguyen M."/>
            <person name="Pham P.K."/>
            <person name="Cheuk R.F."/>
            <person name="Karlin-Newmann G."/>
            <person name="Liu S.X."/>
            <person name="Lam B."/>
            <person name="Sakano H."/>
            <person name="Wu T."/>
            <person name="Yu G."/>
            <person name="Miranda M."/>
            <person name="Quach H.L."/>
            <person name="Tripp M."/>
            <person name="Chang C.H."/>
            <person name="Lee J.M."/>
            <person name="Toriumi M.J."/>
            <person name="Chan M.M."/>
            <person name="Tang C.C."/>
            <person name="Onodera C.S."/>
            <person name="Deng J.M."/>
            <person name="Akiyama K."/>
            <person name="Ansari Y."/>
            <person name="Arakawa T."/>
            <person name="Banh J."/>
            <person name="Banno F."/>
            <person name="Bowser L."/>
            <person name="Brooks S.Y."/>
            <person name="Carninci P."/>
            <person name="Chao Q."/>
            <person name="Choy N."/>
            <person name="Enju A."/>
            <person name="Goldsmith A.D."/>
            <person name="Gurjal M."/>
            <person name="Hansen N.F."/>
            <person name="Hayashizaki Y."/>
            <person name="Johnson-Hopson C."/>
            <person name="Hsuan V.W."/>
            <person name="Iida K."/>
            <person name="Karnes M."/>
            <person name="Khan S."/>
            <person name="Koesema E."/>
            <person name="Ishida J."/>
            <person name="Jiang P.X."/>
            <person name="Jones T."/>
            <person name="Kawai J."/>
            <person name="Kamiya A."/>
            <person name="Meyers C."/>
            <person name="Nakajima M."/>
            <person name="Narusaka M."/>
            <person name="Seki M."/>
            <person name="Sakurai T."/>
            <person name="Satou M."/>
            <person name="Tamse R."/>
            <person name="Vaysberg M."/>
            <person name="Wallender E.K."/>
            <person name="Wong C."/>
            <person name="Yamamura Y."/>
            <person name="Yuan S."/>
            <person name="Shinozaki K."/>
            <person name="Davis R.W."/>
            <person name="Theologis A."/>
            <person name="Ecker J.R."/>
        </authorList>
    </citation>
    <scope>NUCLEOTIDE SEQUENCE [LARGE SCALE MRNA]</scope>
    <source>
        <strain>cv. Columbia</strain>
    </source>
</reference>
<gene>
    <name type="ordered locus">At5g40530</name>
    <name type="ORF">MNF13.4</name>
</gene>
<name>RRP8_ARATH</name>